<organism>
    <name type="scientific">Burkholderia pseudomallei (strain 1710b)</name>
    <dbReference type="NCBI Taxonomy" id="320372"/>
    <lineage>
        <taxon>Bacteria</taxon>
        <taxon>Pseudomonadati</taxon>
        <taxon>Pseudomonadota</taxon>
        <taxon>Betaproteobacteria</taxon>
        <taxon>Burkholderiales</taxon>
        <taxon>Burkholderiaceae</taxon>
        <taxon>Burkholderia</taxon>
        <taxon>pseudomallei group</taxon>
    </lineage>
</organism>
<protein>
    <recommendedName>
        <fullName evidence="1">Glycerol-3-phosphate dehydrogenase [NAD(P)+]</fullName>
        <ecNumber evidence="1">1.1.1.94</ecNumber>
    </recommendedName>
    <alternativeName>
        <fullName evidence="1">NAD(P)(+)-dependent glycerol-3-phosphate dehydrogenase</fullName>
    </alternativeName>
    <alternativeName>
        <fullName evidence="1">NAD(P)H-dependent dihydroxyacetone-phosphate reductase</fullName>
    </alternativeName>
</protein>
<evidence type="ECO:0000255" key="1">
    <source>
        <dbReference type="HAMAP-Rule" id="MF_00394"/>
    </source>
</evidence>
<sequence>MKVAVLGAGAWGTALAAHLAVRHDTLLWARDAALVAELAVRRENARYLGGVALPPGLRYEADLATALSHAQADDALCVIAAPVAGLRALCRAMRDARRVPAHFVWVCKGFEADTRRLPHQMVAEELPDHASYGVLSGPSFAREVAQGLPVALTVASASAACRERTLAAFHHGAMRIYTGDDVVGVEVGGAVKNVLAIATGIADGLGLGLNARAALVTRGLAEMSRLGVALGGRAETFTGLTGLGDLILTATGDLSRNRSVGLQLAAGRSLDDILAALGHVAEGVRCARAVLSIARERGVDMPITEAVCAVLFDGVAPRDAVSGLLRRDAKAE</sequence>
<reference key="1">
    <citation type="journal article" date="2010" name="Genome Biol. Evol.">
        <title>Continuing evolution of Burkholderia mallei through genome reduction and large-scale rearrangements.</title>
        <authorList>
            <person name="Losada L."/>
            <person name="Ronning C.M."/>
            <person name="DeShazer D."/>
            <person name="Woods D."/>
            <person name="Fedorova N."/>
            <person name="Kim H.S."/>
            <person name="Shabalina S.A."/>
            <person name="Pearson T.R."/>
            <person name="Brinkac L."/>
            <person name="Tan P."/>
            <person name="Nandi T."/>
            <person name="Crabtree J."/>
            <person name="Badger J."/>
            <person name="Beckstrom-Sternberg S."/>
            <person name="Saqib M."/>
            <person name="Schutzer S.E."/>
            <person name="Keim P."/>
            <person name="Nierman W.C."/>
        </authorList>
    </citation>
    <scope>NUCLEOTIDE SEQUENCE [LARGE SCALE GENOMIC DNA]</scope>
    <source>
        <strain>1710b</strain>
    </source>
</reference>
<dbReference type="EC" id="1.1.1.94" evidence="1"/>
<dbReference type="EMBL" id="CP000124">
    <property type="protein sequence ID" value="ABA48297.1"/>
    <property type="molecule type" value="Genomic_DNA"/>
</dbReference>
<dbReference type="RefSeq" id="WP_004526020.1">
    <property type="nucleotide sequence ID" value="NC_007434.1"/>
</dbReference>
<dbReference type="SMR" id="Q3JWH3"/>
<dbReference type="EnsemblBacteria" id="ABA48297">
    <property type="protein sequence ID" value="ABA48297"/>
    <property type="gene ID" value="BURPS1710b_0666"/>
</dbReference>
<dbReference type="KEGG" id="bpm:BURPS1710b_0666"/>
<dbReference type="HOGENOM" id="CLU_033449_0_2_4"/>
<dbReference type="UniPathway" id="UPA00940"/>
<dbReference type="Proteomes" id="UP000002700">
    <property type="component" value="Chromosome I"/>
</dbReference>
<dbReference type="GO" id="GO:0005829">
    <property type="term" value="C:cytosol"/>
    <property type="evidence" value="ECO:0007669"/>
    <property type="project" value="TreeGrafter"/>
</dbReference>
<dbReference type="GO" id="GO:0047952">
    <property type="term" value="F:glycerol-3-phosphate dehydrogenase [NAD(P)+] activity"/>
    <property type="evidence" value="ECO:0007669"/>
    <property type="project" value="UniProtKB-UniRule"/>
</dbReference>
<dbReference type="GO" id="GO:0051287">
    <property type="term" value="F:NAD binding"/>
    <property type="evidence" value="ECO:0007669"/>
    <property type="project" value="InterPro"/>
</dbReference>
<dbReference type="GO" id="GO:0005975">
    <property type="term" value="P:carbohydrate metabolic process"/>
    <property type="evidence" value="ECO:0007669"/>
    <property type="project" value="InterPro"/>
</dbReference>
<dbReference type="GO" id="GO:0046167">
    <property type="term" value="P:glycerol-3-phosphate biosynthetic process"/>
    <property type="evidence" value="ECO:0007669"/>
    <property type="project" value="UniProtKB-UniRule"/>
</dbReference>
<dbReference type="GO" id="GO:0046168">
    <property type="term" value="P:glycerol-3-phosphate catabolic process"/>
    <property type="evidence" value="ECO:0007669"/>
    <property type="project" value="InterPro"/>
</dbReference>
<dbReference type="GO" id="GO:0006650">
    <property type="term" value="P:glycerophospholipid metabolic process"/>
    <property type="evidence" value="ECO:0007669"/>
    <property type="project" value="UniProtKB-UniRule"/>
</dbReference>
<dbReference type="GO" id="GO:0008654">
    <property type="term" value="P:phospholipid biosynthetic process"/>
    <property type="evidence" value="ECO:0007669"/>
    <property type="project" value="UniProtKB-KW"/>
</dbReference>
<dbReference type="FunFam" id="1.10.1040.10:FF:000001">
    <property type="entry name" value="Glycerol-3-phosphate dehydrogenase [NAD(P)+]"/>
    <property type="match status" value="1"/>
</dbReference>
<dbReference type="FunFam" id="3.40.50.720:FF:000019">
    <property type="entry name" value="Glycerol-3-phosphate dehydrogenase [NAD(P)+]"/>
    <property type="match status" value="1"/>
</dbReference>
<dbReference type="Gene3D" id="1.10.1040.10">
    <property type="entry name" value="N-(1-d-carboxylethyl)-l-norvaline Dehydrogenase, domain 2"/>
    <property type="match status" value="1"/>
</dbReference>
<dbReference type="Gene3D" id="3.40.50.720">
    <property type="entry name" value="NAD(P)-binding Rossmann-like Domain"/>
    <property type="match status" value="1"/>
</dbReference>
<dbReference type="HAMAP" id="MF_00394">
    <property type="entry name" value="NAD_Glyc3P_dehydrog"/>
    <property type="match status" value="1"/>
</dbReference>
<dbReference type="InterPro" id="IPR008927">
    <property type="entry name" value="6-PGluconate_DH-like_C_sf"/>
</dbReference>
<dbReference type="InterPro" id="IPR013328">
    <property type="entry name" value="6PGD_dom2"/>
</dbReference>
<dbReference type="InterPro" id="IPR006168">
    <property type="entry name" value="G3P_DH_NAD-dep"/>
</dbReference>
<dbReference type="InterPro" id="IPR006109">
    <property type="entry name" value="G3P_DH_NAD-dep_C"/>
</dbReference>
<dbReference type="InterPro" id="IPR011128">
    <property type="entry name" value="G3P_DH_NAD-dep_N"/>
</dbReference>
<dbReference type="InterPro" id="IPR036291">
    <property type="entry name" value="NAD(P)-bd_dom_sf"/>
</dbReference>
<dbReference type="NCBIfam" id="NF000940">
    <property type="entry name" value="PRK00094.1-2"/>
    <property type="match status" value="1"/>
</dbReference>
<dbReference type="NCBIfam" id="NF000942">
    <property type="entry name" value="PRK00094.1-4"/>
    <property type="match status" value="1"/>
</dbReference>
<dbReference type="PANTHER" id="PTHR11728">
    <property type="entry name" value="GLYCEROL-3-PHOSPHATE DEHYDROGENASE"/>
    <property type="match status" value="1"/>
</dbReference>
<dbReference type="PANTHER" id="PTHR11728:SF1">
    <property type="entry name" value="GLYCEROL-3-PHOSPHATE DEHYDROGENASE [NAD(+)] 2, CHLOROPLASTIC"/>
    <property type="match status" value="1"/>
</dbReference>
<dbReference type="Pfam" id="PF07479">
    <property type="entry name" value="NAD_Gly3P_dh_C"/>
    <property type="match status" value="1"/>
</dbReference>
<dbReference type="Pfam" id="PF01210">
    <property type="entry name" value="NAD_Gly3P_dh_N"/>
    <property type="match status" value="1"/>
</dbReference>
<dbReference type="PIRSF" id="PIRSF000114">
    <property type="entry name" value="Glycerol-3-P_dh"/>
    <property type="match status" value="1"/>
</dbReference>
<dbReference type="PRINTS" id="PR00077">
    <property type="entry name" value="GPDHDRGNASE"/>
</dbReference>
<dbReference type="SUPFAM" id="SSF48179">
    <property type="entry name" value="6-phosphogluconate dehydrogenase C-terminal domain-like"/>
    <property type="match status" value="1"/>
</dbReference>
<dbReference type="SUPFAM" id="SSF51735">
    <property type="entry name" value="NAD(P)-binding Rossmann-fold domains"/>
    <property type="match status" value="1"/>
</dbReference>
<dbReference type="PROSITE" id="PS00957">
    <property type="entry name" value="NAD_G3PDH"/>
    <property type="match status" value="1"/>
</dbReference>
<keyword id="KW-0963">Cytoplasm</keyword>
<keyword id="KW-0444">Lipid biosynthesis</keyword>
<keyword id="KW-0443">Lipid metabolism</keyword>
<keyword id="KW-0520">NAD</keyword>
<keyword id="KW-0521">NADP</keyword>
<keyword id="KW-0547">Nucleotide-binding</keyword>
<keyword id="KW-0560">Oxidoreductase</keyword>
<keyword id="KW-0594">Phospholipid biosynthesis</keyword>
<keyword id="KW-1208">Phospholipid metabolism</keyword>
<gene>
    <name evidence="1" type="primary">gpsA</name>
    <name type="ordered locus">BURPS1710b_0666</name>
</gene>
<accession>Q3JWH3</accession>
<comment type="function">
    <text evidence="1">Catalyzes the reduction of the glycolytic intermediate dihydroxyacetone phosphate (DHAP) to sn-glycerol 3-phosphate (G3P), the key precursor for phospholipid synthesis.</text>
</comment>
<comment type="catalytic activity">
    <reaction evidence="1">
        <text>sn-glycerol 3-phosphate + NAD(+) = dihydroxyacetone phosphate + NADH + H(+)</text>
        <dbReference type="Rhea" id="RHEA:11092"/>
        <dbReference type="ChEBI" id="CHEBI:15378"/>
        <dbReference type="ChEBI" id="CHEBI:57540"/>
        <dbReference type="ChEBI" id="CHEBI:57597"/>
        <dbReference type="ChEBI" id="CHEBI:57642"/>
        <dbReference type="ChEBI" id="CHEBI:57945"/>
        <dbReference type="EC" id="1.1.1.94"/>
    </reaction>
    <physiologicalReaction direction="right-to-left" evidence="1">
        <dbReference type="Rhea" id="RHEA:11094"/>
    </physiologicalReaction>
</comment>
<comment type="catalytic activity">
    <reaction evidence="1">
        <text>sn-glycerol 3-phosphate + NADP(+) = dihydroxyacetone phosphate + NADPH + H(+)</text>
        <dbReference type="Rhea" id="RHEA:11096"/>
        <dbReference type="ChEBI" id="CHEBI:15378"/>
        <dbReference type="ChEBI" id="CHEBI:57597"/>
        <dbReference type="ChEBI" id="CHEBI:57642"/>
        <dbReference type="ChEBI" id="CHEBI:57783"/>
        <dbReference type="ChEBI" id="CHEBI:58349"/>
        <dbReference type="EC" id="1.1.1.94"/>
    </reaction>
    <physiologicalReaction direction="right-to-left" evidence="1">
        <dbReference type="Rhea" id="RHEA:11098"/>
    </physiologicalReaction>
</comment>
<comment type="pathway">
    <text evidence="1">Membrane lipid metabolism; glycerophospholipid metabolism.</text>
</comment>
<comment type="subcellular location">
    <subcellularLocation>
        <location evidence="1">Cytoplasm</location>
    </subcellularLocation>
</comment>
<comment type="similarity">
    <text evidence="1">Belongs to the NAD-dependent glycerol-3-phosphate dehydrogenase family.</text>
</comment>
<name>GPDA_BURP1</name>
<proteinExistence type="inferred from homology"/>
<feature type="chain" id="PRO_0000255289" description="Glycerol-3-phosphate dehydrogenase [NAD(P)+]">
    <location>
        <begin position="1"/>
        <end position="332"/>
    </location>
</feature>
<feature type="active site" description="Proton acceptor" evidence="1">
    <location>
        <position position="192"/>
    </location>
</feature>
<feature type="binding site" evidence="1">
    <location>
        <position position="11"/>
    </location>
    <ligand>
        <name>NADPH</name>
        <dbReference type="ChEBI" id="CHEBI:57783"/>
    </ligand>
</feature>
<feature type="binding site" evidence="1">
    <location>
        <position position="30"/>
    </location>
    <ligand>
        <name>NADPH</name>
        <dbReference type="ChEBI" id="CHEBI:57783"/>
    </ligand>
</feature>
<feature type="binding site" evidence="1">
    <location>
        <position position="108"/>
    </location>
    <ligand>
        <name>NADPH</name>
        <dbReference type="ChEBI" id="CHEBI:57783"/>
    </ligand>
</feature>
<feature type="binding site" evidence="1">
    <location>
        <position position="108"/>
    </location>
    <ligand>
        <name>sn-glycerol 3-phosphate</name>
        <dbReference type="ChEBI" id="CHEBI:57597"/>
    </ligand>
</feature>
<feature type="binding site" evidence="1">
    <location>
        <position position="137"/>
    </location>
    <ligand>
        <name>sn-glycerol 3-phosphate</name>
        <dbReference type="ChEBI" id="CHEBI:57597"/>
    </ligand>
</feature>
<feature type="binding site" evidence="1">
    <location>
        <position position="139"/>
    </location>
    <ligand>
        <name>sn-glycerol 3-phosphate</name>
        <dbReference type="ChEBI" id="CHEBI:57597"/>
    </ligand>
</feature>
<feature type="binding site" evidence="1">
    <location>
        <position position="141"/>
    </location>
    <ligand>
        <name>NADPH</name>
        <dbReference type="ChEBI" id="CHEBI:57783"/>
    </ligand>
</feature>
<feature type="binding site" evidence="1">
    <location>
        <position position="192"/>
    </location>
    <ligand>
        <name>sn-glycerol 3-phosphate</name>
        <dbReference type="ChEBI" id="CHEBI:57597"/>
    </ligand>
</feature>
<feature type="binding site" evidence="1">
    <location>
        <position position="245"/>
    </location>
    <ligand>
        <name>sn-glycerol 3-phosphate</name>
        <dbReference type="ChEBI" id="CHEBI:57597"/>
    </ligand>
</feature>
<feature type="binding site" evidence="1">
    <location>
        <position position="255"/>
    </location>
    <ligand>
        <name>sn-glycerol 3-phosphate</name>
        <dbReference type="ChEBI" id="CHEBI:57597"/>
    </ligand>
</feature>
<feature type="binding site" evidence="1">
    <location>
        <position position="256"/>
    </location>
    <ligand>
        <name>NADPH</name>
        <dbReference type="ChEBI" id="CHEBI:57783"/>
    </ligand>
</feature>
<feature type="binding site" evidence="1">
    <location>
        <position position="256"/>
    </location>
    <ligand>
        <name>sn-glycerol 3-phosphate</name>
        <dbReference type="ChEBI" id="CHEBI:57597"/>
    </ligand>
</feature>
<feature type="binding site" evidence="1">
    <location>
        <position position="257"/>
    </location>
    <ligand>
        <name>sn-glycerol 3-phosphate</name>
        <dbReference type="ChEBI" id="CHEBI:57597"/>
    </ligand>
</feature>
<feature type="binding site" evidence="1">
    <location>
        <position position="280"/>
    </location>
    <ligand>
        <name>NADPH</name>
        <dbReference type="ChEBI" id="CHEBI:57783"/>
    </ligand>
</feature>
<feature type="binding site" evidence="1">
    <location>
        <position position="282"/>
    </location>
    <ligand>
        <name>NADPH</name>
        <dbReference type="ChEBI" id="CHEBI:57783"/>
    </ligand>
</feature>